<proteinExistence type="inferred from homology"/>
<feature type="chain" id="PRO_0000181807" description="tRNA(Ile)-lysidine synthase">
    <location>
        <begin position="1"/>
        <end position="440"/>
    </location>
</feature>
<feature type="binding site" evidence="1">
    <location>
        <begin position="28"/>
        <end position="33"/>
    </location>
    <ligand>
        <name>ATP</name>
        <dbReference type="ChEBI" id="CHEBI:30616"/>
    </ligand>
</feature>
<name>TILS_XANAC</name>
<reference key="1">
    <citation type="journal article" date="2002" name="Nature">
        <title>Comparison of the genomes of two Xanthomonas pathogens with differing host specificities.</title>
        <authorList>
            <person name="da Silva A.C.R."/>
            <person name="Ferro J.A."/>
            <person name="Reinach F.C."/>
            <person name="Farah C.S."/>
            <person name="Furlan L.R."/>
            <person name="Quaggio R.B."/>
            <person name="Monteiro-Vitorello C.B."/>
            <person name="Van Sluys M.A."/>
            <person name="Almeida N.F. Jr."/>
            <person name="Alves L.M.C."/>
            <person name="do Amaral A.M."/>
            <person name="Bertolini M.C."/>
            <person name="Camargo L.E.A."/>
            <person name="Camarotte G."/>
            <person name="Cannavan F."/>
            <person name="Cardozo J."/>
            <person name="Chambergo F."/>
            <person name="Ciapina L.P."/>
            <person name="Cicarelli R.M.B."/>
            <person name="Coutinho L.L."/>
            <person name="Cursino-Santos J.R."/>
            <person name="El-Dorry H."/>
            <person name="Faria J.B."/>
            <person name="Ferreira A.J.S."/>
            <person name="Ferreira R.C.C."/>
            <person name="Ferro M.I.T."/>
            <person name="Formighieri E.F."/>
            <person name="Franco M.C."/>
            <person name="Greggio C.C."/>
            <person name="Gruber A."/>
            <person name="Katsuyama A.M."/>
            <person name="Kishi L.T."/>
            <person name="Leite R.P."/>
            <person name="Lemos E.G.M."/>
            <person name="Lemos M.V.F."/>
            <person name="Locali E.C."/>
            <person name="Machado M.A."/>
            <person name="Madeira A.M.B.N."/>
            <person name="Martinez-Rossi N.M."/>
            <person name="Martins E.C."/>
            <person name="Meidanis J."/>
            <person name="Menck C.F.M."/>
            <person name="Miyaki C.Y."/>
            <person name="Moon D.H."/>
            <person name="Moreira L.M."/>
            <person name="Novo M.T.M."/>
            <person name="Okura V.K."/>
            <person name="Oliveira M.C."/>
            <person name="Oliveira V.R."/>
            <person name="Pereira H.A."/>
            <person name="Rossi A."/>
            <person name="Sena J.A.D."/>
            <person name="Silva C."/>
            <person name="de Souza R.F."/>
            <person name="Spinola L.A.F."/>
            <person name="Takita M.A."/>
            <person name="Tamura R.E."/>
            <person name="Teixeira E.C."/>
            <person name="Tezza R.I.D."/>
            <person name="Trindade dos Santos M."/>
            <person name="Truffi D."/>
            <person name="Tsai S.M."/>
            <person name="White F.F."/>
            <person name="Setubal J.C."/>
            <person name="Kitajima J.P."/>
        </authorList>
    </citation>
    <scope>NUCLEOTIDE SEQUENCE [LARGE SCALE GENOMIC DNA]</scope>
    <source>
        <strain>306</strain>
    </source>
</reference>
<evidence type="ECO:0000255" key="1">
    <source>
        <dbReference type="HAMAP-Rule" id="MF_01161"/>
    </source>
</evidence>
<keyword id="KW-0067">ATP-binding</keyword>
<keyword id="KW-0963">Cytoplasm</keyword>
<keyword id="KW-0436">Ligase</keyword>
<keyword id="KW-0547">Nucleotide-binding</keyword>
<keyword id="KW-0819">tRNA processing</keyword>
<gene>
    <name evidence="1" type="primary">tilS</name>
    <name type="ordered locus">XAC2760</name>
</gene>
<protein>
    <recommendedName>
        <fullName evidence="1">tRNA(Ile)-lysidine synthase</fullName>
        <ecNumber evidence="1">6.3.4.19</ecNumber>
    </recommendedName>
    <alternativeName>
        <fullName evidence="1">tRNA(Ile)-2-lysyl-cytidine synthase</fullName>
    </alternativeName>
    <alternativeName>
        <fullName evidence="1">tRNA(Ile)-lysidine synthetase</fullName>
    </alternativeName>
</protein>
<accession>Q8PIY5</accession>
<organism>
    <name type="scientific">Xanthomonas axonopodis pv. citri (strain 306)</name>
    <dbReference type="NCBI Taxonomy" id="190486"/>
    <lineage>
        <taxon>Bacteria</taxon>
        <taxon>Pseudomonadati</taxon>
        <taxon>Pseudomonadota</taxon>
        <taxon>Gammaproteobacteria</taxon>
        <taxon>Lysobacterales</taxon>
        <taxon>Lysobacteraceae</taxon>
        <taxon>Xanthomonas</taxon>
    </lineage>
</organism>
<comment type="function">
    <text evidence="1">Ligates lysine onto the cytidine present at position 34 of the AUA codon-specific tRNA(Ile) that contains the anticodon CAU, in an ATP-dependent manner. Cytidine is converted to lysidine, thus changing the amino acid specificity of the tRNA from methionine to isoleucine.</text>
</comment>
<comment type="catalytic activity">
    <reaction evidence="1">
        <text>cytidine(34) in tRNA(Ile2) + L-lysine + ATP = lysidine(34) in tRNA(Ile2) + AMP + diphosphate + H(+)</text>
        <dbReference type="Rhea" id="RHEA:43744"/>
        <dbReference type="Rhea" id="RHEA-COMP:10625"/>
        <dbReference type="Rhea" id="RHEA-COMP:10670"/>
        <dbReference type="ChEBI" id="CHEBI:15378"/>
        <dbReference type="ChEBI" id="CHEBI:30616"/>
        <dbReference type="ChEBI" id="CHEBI:32551"/>
        <dbReference type="ChEBI" id="CHEBI:33019"/>
        <dbReference type="ChEBI" id="CHEBI:82748"/>
        <dbReference type="ChEBI" id="CHEBI:83665"/>
        <dbReference type="ChEBI" id="CHEBI:456215"/>
        <dbReference type="EC" id="6.3.4.19"/>
    </reaction>
</comment>
<comment type="subcellular location">
    <subcellularLocation>
        <location evidence="1">Cytoplasm</location>
    </subcellularLocation>
</comment>
<comment type="domain">
    <text>The N-terminal region contains the highly conserved SGGXDS motif, predicted to be a P-loop motif involved in ATP binding.</text>
</comment>
<comment type="similarity">
    <text evidence="1">Belongs to the tRNA(Ile)-lysidine synthase family.</text>
</comment>
<sequence>MRCEVAPVLTGTPLLPATPPGPVLLAYSGGMDSSVLLHLLAARPRYRHAGLRALHVHHGLHADADAWAAHCQRTCDALQVPLQIVRVQVARDSGLGLEAAARNARHAAFAQALIAGEWLALAHHRDDQAETFLLRALRASGPEGLAAMRPQRPFASGTLWRPMLAHARADLLAYAHAHRLRWIDDPSNTDPRHDRNFLRSQVLPLLQQRWPQATDALARSAQLSADASALLLQQDMALLPGVLTASGALDLQALRAQSVERRARLLRAWVSAAHAPPLPAHGVAALEQEIDNHAADRHACFAWQQVEVRRWRQCLFLHRPAAAWPSDWHAQWDGAAPLQLPDGAQLRLLGAPGLRFAQPLLVRARQGGERIVLPQRGHSHQLKHLLQALDLPPWERERLPVLWEGAQVLAAGDCIISGTLDAWLQANAAALQWRTAADAN</sequence>
<dbReference type="EC" id="6.3.4.19" evidence="1"/>
<dbReference type="EMBL" id="AE008923">
    <property type="protein sequence ID" value="AAM37605.1"/>
    <property type="molecule type" value="Genomic_DNA"/>
</dbReference>
<dbReference type="SMR" id="Q8PIY5"/>
<dbReference type="KEGG" id="xac:XAC2760"/>
<dbReference type="eggNOG" id="COG0037">
    <property type="taxonomic scope" value="Bacteria"/>
</dbReference>
<dbReference type="HOGENOM" id="CLU_018869_2_0_6"/>
<dbReference type="Proteomes" id="UP000000576">
    <property type="component" value="Chromosome"/>
</dbReference>
<dbReference type="GO" id="GO:0005737">
    <property type="term" value="C:cytoplasm"/>
    <property type="evidence" value="ECO:0007669"/>
    <property type="project" value="UniProtKB-SubCell"/>
</dbReference>
<dbReference type="GO" id="GO:0005524">
    <property type="term" value="F:ATP binding"/>
    <property type="evidence" value="ECO:0007669"/>
    <property type="project" value="UniProtKB-UniRule"/>
</dbReference>
<dbReference type="GO" id="GO:0032267">
    <property type="term" value="F:tRNA(Ile)-lysidine synthase activity"/>
    <property type="evidence" value="ECO:0007669"/>
    <property type="project" value="UniProtKB-EC"/>
</dbReference>
<dbReference type="GO" id="GO:0006400">
    <property type="term" value="P:tRNA modification"/>
    <property type="evidence" value="ECO:0007669"/>
    <property type="project" value="UniProtKB-UniRule"/>
</dbReference>
<dbReference type="CDD" id="cd01992">
    <property type="entry name" value="TilS_N"/>
    <property type="match status" value="1"/>
</dbReference>
<dbReference type="Gene3D" id="1.20.59.20">
    <property type="match status" value="1"/>
</dbReference>
<dbReference type="Gene3D" id="3.40.50.620">
    <property type="entry name" value="HUPs"/>
    <property type="match status" value="1"/>
</dbReference>
<dbReference type="HAMAP" id="MF_01161">
    <property type="entry name" value="tRNA_Ile_lys_synt"/>
    <property type="match status" value="1"/>
</dbReference>
<dbReference type="InterPro" id="IPR012796">
    <property type="entry name" value="Lysidine-tRNA-synth_C"/>
</dbReference>
<dbReference type="InterPro" id="IPR014729">
    <property type="entry name" value="Rossmann-like_a/b/a_fold"/>
</dbReference>
<dbReference type="InterPro" id="IPR011063">
    <property type="entry name" value="TilS/TtcA_N"/>
</dbReference>
<dbReference type="InterPro" id="IPR012094">
    <property type="entry name" value="tRNA_Ile_lys_synt"/>
</dbReference>
<dbReference type="InterPro" id="IPR012795">
    <property type="entry name" value="tRNA_Ile_lys_synt_N"/>
</dbReference>
<dbReference type="InterPro" id="IPR015262">
    <property type="entry name" value="tRNA_Ile_lys_synt_subst-bd"/>
</dbReference>
<dbReference type="NCBIfam" id="TIGR02433">
    <property type="entry name" value="lysidine_TilS_C"/>
    <property type="match status" value="1"/>
</dbReference>
<dbReference type="NCBIfam" id="TIGR02432">
    <property type="entry name" value="lysidine_TilS_N"/>
    <property type="match status" value="1"/>
</dbReference>
<dbReference type="PANTHER" id="PTHR43033">
    <property type="entry name" value="TRNA(ILE)-LYSIDINE SYNTHASE-RELATED"/>
    <property type="match status" value="1"/>
</dbReference>
<dbReference type="PANTHER" id="PTHR43033:SF1">
    <property type="entry name" value="TRNA(ILE)-LYSIDINE SYNTHASE-RELATED"/>
    <property type="match status" value="1"/>
</dbReference>
<dbReference type="Pfam" id="PF01171">
    <property type="entry name" value="ATP_bind_3"/>
    <property type="match status" value="1"/>
</dbReference>
<dbReference type="Pfam" id="PF09179">
    <property type="entry name" value="TilS"/>
    <property type="match status" value="1"/>
</dbReference>
<dbReference type="Pfam" id="PF11734">
    <property type="entry name" value="TilS_C"/>
    <property type="match status" value="1"/>
</dbReference>
<dbReference type="SMART" id="SM00977">
    <property type="entry name" value="TilS_C"/>
    <property type="match status" value="1"/>
</dbReference>
<dbReference type="SUPFAM" id="SSF52402">
    <property type="entry name" value="Adenine nucleotide alpha hydrolases-like"/>
    <property type="match status" value="1"/>
</dbReference>
<dbReference type="SUPFAM" id="SSF82829">
    <property type="entry name" value="MesJ substrate recognition domain-like"/>
    <property type="match status" value="1"/>
</dbReference>
<dbReference type="SUPFAM" id="SSF56037">
    <property type="entry name" value="PheT/TilS domain"/>
    <property type="match status" value="1"/>
</dbReference>